<dbReference type="EMBL" id="AF539751">
    <property type="protein sequence ID" value="AAN33108.1"/>
    <property type="molecule type" value="Genomic_DNA"/>
</dbReference>
<dbReference type="EMBL" id="AE016795">
    <property type="protein sequence ID" value="AAO10774.1"/>
    <property type="molecule type" value="Genomic_DNA"/>
</dbReference>
<dbReference type="RefSeq" id="WP_004727974.1">
    <property type="nucleotide sequence ID" value="NC_004459.3"/>
</dbReference>
<dbReference type="SMR" id="P0A482"/>
<dbReference type="GeneID" id="95677414"/>
<dbReference type="KEGG" id="vvu:VV1_2400"/>
<dbReference type="HOGENOM" id="CLU_123265_0_1_6"/>
<dbReference type="Proteomes" id="UP000002275">
    <property type="component" value="Chromosome 1"/>
</dbReference>
<dbReference type="GO" id="GO:1990904">
    <property type="term" value="C:ribonucleoprotein complex"/>
    <property type="evidence" value="ECO:0007669"/>
    <property type="project" value="UniProtKB-KW"/>
</dbReference>
<dbReference type="GO" id="GO:0005840">
    <property type="term" value="C:ribosome"/>
    <property type="evidence" value="ECO:0007669"/>
    <property type="project" value="UniProtKB-KW"/>
</dbReference>
<dbReference type="GO" id="GO:0019843">
    <property type="term" value="F:rRNA binding"/>
    <property type="evidence" value="ECO:0007669"/>
    <property type="project" value="UniProtKB-UniRule"/>
</dbReference>
<dbReference type="GO" id="GO:0003735">
    <property type="term" value="F:structural constituent of ribosome"/>
    <property type="evidence" value="ECO:0007669"/>
    <property type="project" value="InterPro"/>
</dbReference>
<dbReference type="GO" id="GO:0000027">
    <property type="term" value="P:ribosomal large subunit assembly"/>
    <property type="evidence" value="ECO:0007669"/>
    <property type="project" value="UniProtKB-UniRule"/>
</dbReference>
<dbReference type="GO" id="GO:0006412">
    <property type="term" value="P:translation"/>
    <property type="evidence" value="ECO:0007669"/>
    <property type="project" value="InterPro"/>
</dbReference>
<dbReference type="CDD" id="cd07026">
    <property type="entry name" value="Ribosomal_L20"/>
    <property type="match status" value="1"/>
</dbReference>
<dbReference type="FunFam" id="1.10.1900.20:FF:000001">
    <property type="entry name" value="50S ribosomal protein L20"/>
    <property type="match status" value="1"/>
</dbReference>
<dbReference type="Gene3D" id="6.10.160.10">
    <property type="match status" value="1"/>
</dbReference>
<dbReference type="Gene3D" id="1.10.1900.20">
    <property type="entry name" value="Ribosomal protein L20"/>
    <property type="match status" value="1"/>
</dbReference>
<dbReference type="HAMAP" id="MF_00382">
    <property type="entry name" value="Ribosomal_bL20"/>
    <property type="match status" value="1"/>
</dbReference>
<dbReference type="InterPro" id="IPR005813">
    <property type="entry name" value="Ribosomal_bL20"/>
</dbReference>
<dbReference type="InterPro" id="IPR049946">
    <property type="entry name" value="RIBOSOMAL_L20_CS"/>
</dbReference>
<dbReference type="InterPro" id="IPR035566">
    <property type="entry name" value="Ribosomal_protein_bL20_C"/>
</dbReference>
<dbReference type="NCBIfam" id="TIGR01032">
    <property type="entry name" value="rplT_bact"/>
    <property type="match status" value="1"/>
</dbReference>
<dbReference type="PANTHER" id="PTHR10986">
    <property type="entry name" value="39S RIBOSOMAL PROTEIN L20"/>
    <property type="match status" value="1"/>
</dbReference>
<dbReference type="Pfam" id="PF00453">
    <property type="entry name" value="Ribosomal_L20"/>
    <property type="match status" value="1"/>
</dbReference>
<dbReference type="PRINTS" id="PR00062">
    <property type="entry name" value="RIBOSOMALL20"/>
</dbReference>
<dbReference type="SUPFAM" id="SSF74731">
    <property type="entry name" value="Ribosomal protein L20"/>
    <property type="match status" value="1"/>
</dbReference>
<dbReference type="PROSITE" id="PS00937">
    <property type="entry name" value="RIBOSOMAL_L20"/>
    <property type="match status" value="1"/>
</dbReference>
<gene>
    <name evidence="1" type="primary">rplT</name>
    <name type="ordered locus">VV1_2400</name>
</gene>
<comment type="function">
    <text evidence="1">Binds directly to 23S ribosomal RNA and is necessary for the in vitro assembly process of the 50S ribosomal subunit. It is not involved in the protein synthesizing functions of that subunit.</text>
</comment>
<comment type="similarity">
    <text evidence="1">Belongs to the bacterial ribosomal protein bL20 family.</text>
</comment>
<organism>
    <name type="scientific">Vibrio vulnificus (strain CMCP6)</name>
    <dbReference type="NCBI Taxonomy" id="216895"/>
    <lineage>
        <taxon>Bacteria</taxon>
        <taxon>Pseudomonadati</taxon>
        <taxon>Pseudomonadota</taxon>
        <taxon>Gammaproteobacteria</taxon>
        <taxon>Vibrionales</taxon>
        <taxon>Vibrionaceae</taxon>
        <taxon>Vibrio</taxon>
    </lineage>
</organism>
<proteinExistence type="inferred from homology"/>
<protein>
    <recommendedName>
        <fullName evidence="1">Large ribosomal subunit protein bL20</fullName>
    </recommendedName>
    <alternativeName>
        <fullName evidence="2">50S ribosomal protein L20</fullName>
    </alternativeName>
</protein>
<evidence type="ECO:0000255" key="1">
    <source>
        <dbReference type="HAMAP-Rule" id="MF_00382"/>
    </source>
</evidence>
<evidence type="ECO:0000305" key="2"/>
<keyword id="KW-0687">Ribonucleoprotein</keyword>
<keyword id="KW-0689">Ribosomal protein</keyword>
<keyword id="KW-0694">RNA-binding</keyword>
<keyword id="KW-0699">rRNA-binding</keyword>
<sequence>MPRVKRGVQARARHKKVLKQAKGYYGARSRVYRVAFQAVTKAGQYAYRDRRAKKRQFRQLWIARINAASRQNGLSYSRFINGLKKASIEIDRKILADIAVFDKAAFAVLVEKAKAAL</sequence>
<feature type="chain" id="PRO_0000177262" description="Large ribosomal subunit protein bL20">
    <location>
        <begin position="1"/>
        <end position="117"/>
    </location>
</feature>
<accession>P0A482</accession>
<accession>Q87Q68</accession>
<accession>Q8CM22</accession>
<name>RL20_VIBVU</name>
<reference key="1">
    <citation type="submission" date="2002-08" db="EMBL/GenBank/DDBJ databases">
        <title>Comparative analysis of super-integrons: engineering extensive genetic diversity in the Vibrionaceae.</title>
        <authorList>
            <person name="Rowe-Magnus D.A."/>
            <person name="Guerout A.-M."/>
            <person name="Biskri L."/>
            <person name="Bouige P."/>
            <person name="Mazel D."/>
        </authorList>
    </citation>
    <scope>NUCLEOTIDE SEQUENCE [GENOMIC DNA]</scope>
    <source>
        <strain>CIP 75.4</strain>
    </source>
</reference>
<reference key="2">
    <citation type="submission" date="2002-12" db="EMBL/GenBank/DDBJ databases">
        <title>Complete genome sequence of Vibrio vulnificus CMCP6.</title>
        <authorList>
            <person name="Rhee J.H."/>
            <person name="Kim S.Y."/>
            <person name="Chung S.S."/>
            <person name="Kim J.J."/>
            <person name="Moon Y.H."/>
            <person name="Jeong H."/>
            <person name="Choy H.E."/>
        </authorList>
    </citation>
    <scope>NUCLEOTIDE SEQUENCE [LARGE SCALE GENOMIC DNA]</scope>
    <source>
        <strain>CMCP6</strain>
    </source>
</reference>